<accession>Q9D9B7</accession>
<accession>E9QQ59</accession>
<dbReference type="EMBL" id="AK007164">
    <property type="protein sequence ID" value="BAB24878.1"/>
    <property type="molecule type" value="mRNA"/>
</dbReference>
<dbReference type="EMBL" id="CT010516">
    <property type="status" value="NOT_ANNOTATED_CDS"/>
    <property type="molecule type" value="Genomic_DNA"/>
</dbReference>
<dbReference type="CCDS" id="CCDS36999.1"/>
<dbReference type="RefSeq" id="NP_083956.1">
    <property type="nucleotide sequence ID" value="NM_029680.1"/>
</dbReference>
<dbReference type="RefSeq" id="XP_006519738.1">
    <property type="nucleotide sequence ID" value="XM_006519675.1"/>
</dbReference>
<dbReference type="FunCoup" id="Q9D9B7">
    <property type="interactions" value="6"/>
</dbReference>
<dbReference type="STRING" id="10090.ENSMUSP00000139590"/>
<dbReference type="iPTMnet" id="Q9D9B7"/>
<dbReference type="PhosphoSitePlus" id="Q9D9B7"/>
<dbReference type="PaxDb" id="10090-ENSMUSP00000060206"/>
<dbReference type="ProteomicsDB" id="291746"/>
<dbReference type="Antibodypedia" id="55555">
    <property type="antibodies" value="55 antibodies from 14 providers"/>
</dbReference>
<dbReference type="Ensembl" id="ENSMUST00000057718.11">
    <property type="protein sequence ID" value="ENSMUSP00000060206.5"/>
    <property type="gene ID" value="ENSMUSG00000042888.11"/>
</dbReference>
<dbReference type="Ensembl" id="ENSMUST00000187304.2">
    <property type="protein sequence ID" value="ENSMUSP00000139590.2"/>
    <property type="gene ID" value="ENSMUSG00000042888.11"/>
</dbReference>
<dbReference type="GeneID" id="76627"/>
<dbReference type="KEGG" id="mmu:76627"/>
<dbReference type="UCSC" id="uc007uvk.1">
    <property type="organism name" value="mouse"/>
</dbReference>
<dbReference type="AGR" id="MGI:1923877"/>
<dbReference type="CTD" id="339779"/>
<dbReference type="MGI" id="MGI:1923877">
    <property type="gene designation" value="Prr30"/>
</dbReference>
<dbReference type="VEuPathDB" id="HostDB:ENSMUSG00000042888"/>
<dbReference type="eggNOG" id="ENOG502SSVJ">
    <property type="taxonomic scope" value="Eukaryota"/>
</dbReference>
<dbReference type="GeneTree" id="ENSGT00390000005754"/>
<dbReference type="HOGENOM" id="CLU_056385_0_0_1"/>
<dbReference type="InParanoid" id="Q9D9B7"/>
<dbReference type="OMA" id="HRRIAHD"/>
<dbReference type="OrthoDB" id="9807493at2759"/>
<dbReference type="TreeFam" id="TF338772"/>
<dbReference type="BioGRID-ORCS" id="76627">
    <property type="hits" value="3 hits in 76 CRISPR screens"/>
</dbReference>
<dbReference type="PRO" id="PR:Q9D9B7"/>
<dbReference type="Proteomes" id="UP000000589">
    <property type="component" value="Chromosome 14"/>
</dbReference>
<dbReference type="RNAct" id="Q9D9B7">
    <property type="molecule type" value="protein"/>
</dbReference>
<dbReference type="Bgee" id="ENSMUSG00000042888">
    <property type="expression patterns" value="Expressed in seminiferous tubule of testis and 10 other cell types or tissues"/>
</dbReference>
<dbReference type="InterPro" id="IPR031461">
    <property type="entry name" value="DUF4679"/>
</dbReference>
<dbReference type="PANTHER" id="PTHR22235">
    <property type="entry name" value="PROLINE-RICH PROTEIN 30"/>
    <property type="match status" value="1"/>
</dbReference>
<dbReference type="PANTHER" id="PTHR22235:SF2">
    <property type="entry name" value="PROLINE-RICH PROTEIN 30"/>
    <property type="match status" value="1"/>
</dbReference>
<dbReference type="Pfam" id="PF15728">
    <property type="entry name" value="DUF4679"/>
    <property type="match status" value="1"/>
</dbReference>
<evidence type="ECO:0000256" key="1">
    <source>
        <dbReference type="SAM" id="MobiDB-lite"/>
    </source>
</evidence>
<evidence type="ECO:0000305" key="2"/>
<proteinExistence type="evidence at transcript level"/>
<sequence length="401" mass="43406">MLPVNKDQVLLQNTVPPGCPPQVLSQFVNSPAPNLASLCPHPTLPSSHFPLPAPPQAYFFSSLTQTHSPGPHFSSDSNSDFVPPHSSSHPRSSSCFGQNYTYFGEKLPSPHSISPSNYQLCVSPPLTGSSSLSQLQHSSPHSCQSPSRLQDLQSPKITSPVPSSPSPRIQNNKQTWQWPQSGSIKSSRGAGVCVPSKVDPAEFKDSGTLTQALVDHVGRRRIARDLQIQFLQRLWLGTPGHAPVVEYPICLVCLQIRTPSCPTPKYKTVPQLLAFPQLLPCVQGQESGPLRIGIGFGLRLPRGQARALHLLPPKNSTPVGVESQEEALQRQKSTIQESVQITGTLFQARSLRSIDLQSPKPSQCSRSLLQEPRQVAASPKAGPSVSKRSVTLGSILRKSPS</sequence>
<keyword id="KW-1185">Reference proteome</keyword>
<name>PRR30_MOUSE</name>
<organism>
    <name type="scientific">Mus musculus</name>
    <name type="common">Mouse</name>
    <dbReference type="NCBI Taxonomy" id="10090"/>
    <lineage>
        <taxon>Eukaryota</taxon>
        <taxon>Metazoa</taxon>
        <taxon>Chordata</taxon>
        <taxon>Craniata</taxon>
        <taxon>Vertebrata</taxon>
        <taxon>Euteleostomi</taxon>
        <taxon>Mammalia</taxon>
        <taxon>Eutheria</taxon>
        <taxon>Euarchontoglires</taxon>
        <taxon>Glires</taxon>
        <taxon>Rodentia</taxon>
        <taxon>Myomorpha</taxon>
        <taxon>Muroidea</taxon>
        <taxon>Muridae</taxon>
        <taxon>Murinae</taxon>
        <taxon>Mus</taxon>
        <taxon>Mus</taxon>
    </lineage>
</organism>
<gene>
    <name type="primary">Prr30</name>
</gene>
<protein>
    <recommendedName>
        <fullName>Proline-rich protein 30</fullName>
    </recommendedName>
</protein>
<reference key="1">
    <citation type="journal article" date="2005" name="Science">
        <title>The transcriptional landscape of the mammalian genome.</title>
        <authorList>
            <person name="Carninci P."/>
            <person name="Kasukawa T."/>
            <person name="Katayama S."/>
            <person name="Gough J."/>
            <person name="Frith M.C."/>
            <person name="Maeda N."/>
            <person name="Oyama R."/>
            <person name="Ravasi T."/>
            <person name="Lenhard B."/>
            <person name="Wells C."/>
            <person name="Kodzius R."/>
            <person name="Shimokawa K."/>
            <person name="Bajic V.B."/>
            <person name="Brenner S.E."/>
            <person name="Batalov S."/>
            <person name="Forrest A.R."/>
            <person name="Zavolan M."/>
            <person name="Davis M.J."/>
            <person name="Wilming L.G."/>
            <person name="Aidinis V."/>
            <person name="Allen J.E."/>
            <person name="Ambesi-Impiombato A."/>
            <person name="Apweiler R."/>
            <person name="Aturaliya R.N."/>
            <person name="Bailey T.L."/>
            <person name="Bansal M."/>
            <person name="Baxter L."/>
            <person name="Beisel K.W."/>
            <person name="Bersano T."/>
            <person name="Bono H."/>
            <person name="Chalk A.M."/>
            <person name="Chiu K.P."/>
            <person name="Choudhary V."/>
            <person name="Christoffels A."/>
            <person name="Clutterbuck D.R."/>
            <person name="Crowe M.L."/>
            <person name="Dalla E."/>
            <person name="Dalrymple B.P."/>
            <person name="de Bono B."/>
            <person name="Della Gatta G."/>
            <person name="di Bernardo D."/>
            <person name="Down T."/>
            <person name="Engstrom P."/>
            <person name="Fagiolini M."/>
            <person name="Faulkner G."/>
            <person name="Fletcher C.F."/>
            <person name="Fukushima T."/>
            <person name="Furuno M."/>
            <person name="Futaki S."/>
            <person name="Gariboldi M."/>
            <person name="Georgii-Hemming P."/>
            <person name="Gingeras T.R."/>
            <person name="Gojobori T."/>
            <person name="Green R.E."/>
            <person name="Gustincich S."/>
            <person name="Harbers M."/>
            <person name="Hayashi Y."/>
            <person name="Hensch T.K."/>
            <person name="Hirokawa N."/>
            <person name="Hill D."/>
            <person name="Huminiecki L."/>
            <person name="Iacono M."/>
            <person name="Ikeo K."/>
            <person name="Iwama A."/>
            <person name="Ishikawa T."/>
            <person name="Jakt M."/>
            <person name="Kanapin A."/>
            <person name="Katoh M."/>
            <person name="Kawasawa Y."/>
            <person name="Kelso J."/>
            <person name="Kitamura H."/>
            <person name="Kitano H."/>
            <person name="Kollias G."/>
            <person name="Krishnan S.P."/>
            <person name="Kruger A."/>
            <person name="Kummerfeld S.K."/>
            <person name="Kurochkin I.V."/>
            <person name="Lareau L.F."/>
            <person name="Lazarevic D."/>
            <person name="Lipovich L."/>
            <person name="Liu J."/>
            <person name="Liuni S."/>
            <person name="McWilliam S."/>
            <person name="Madan Babu M."/>
            <person name="Madera M."/>
            <person name="Marchionni L."/>
            <person name="Matsuda H."/>
            <person name="Matsuzawa S."/>
            <person name="Miki H."/>
            <person name="Mignone F."/>
            <person name="Miyake S."/>
            <person name="Morris K."/>
            <person name="Mottagui-Tabar S."/>
            <person name="Mulder N."/>
            <person name="Nakano N."/>
            <person name="Nakauchi H."/>
            <person name="Ng P."/>
            <person name="Nilsson R."/>
            <person name="Nishiguchi S."/>
            <person name="Nishikawa S."/>
            <person name="Nori F."/>
            <person name="Ohara O."/>
            <person name="Okazaki Y."/>
            <person name="Orlando V."/>
            <person name="Pang K.C."/>
            <person name="Pavan W.J."/>
            <person name="Pavesi G."/>
            <person name="Pesole G."/>
            <person name="Petrovsky N."/>
            <person name="Piazza S."/>
            <person name="Reed J."/>
            <person name="Reid J.F."/>
            <person name="Ring B.Z."/>
            <person name="Ringwald M."/>
            <person name="Rost B."/>
            <person name="Ruan Y."/>
            <person name="Salzberg S.L."/>
            <person name="Sandelin A."/>
            <person name="Schneider C."/>
            <person name="Schoenbach C."/>
            <person name="Sekiguchi K."/>
            <person name="Semple C.A."/>
            <person name="Seno S."/>
            <person name="Sessa L."/>
            <person name="Sheng Y."/>
            <person name="Shibata Y."/>
            <person name="Shimada H."/>
            <person name="Shimada K."/>
            <person name="Silva D."/>
            <person name="Sinclair B."/>
            <person name="Sperling S."/>
            <person name="Stupka E."/>
            <person name="Sugiura K."/>
            <person name="Sultana R."/>
            <person name="Takenaka Y."/>
            <person name="Taki K."/>
            <person name="Tammoja K."/>
            <person name="Tan S.L."/>
            <person name="Tang S."/>
            <person name="Taylor M.S."/>
            <person name="Tegner J."/>
            <person name="Teichmann S.A."/>
            <person name="Ueda H.R."/>
            <person name="van Nimwegen E."/>
            <person name="Verardo R."/>
            <person name="Wei C.L."/>
            <person name="Yagi K."/>
            <person name="Yamanishi H."/>
            <person name="Zabarovsky E."/>
            <person name="Zhu S."/>
            <person name="Zimmer A."/>
            <person name="Hide W."/>
            <person name="Bult C."/>
            <person name="Grimmond S.M."/>
            <person name="Teasdale R.D."/>
            <person name="Liu E.T."/>
            <person name="Brusic V."/>
            <person name="Quackenbush J."/>
            <person name="Wahlestedt C."/>
            <person name="Mattick J.S."/>
            <person name="Hume D.A."/>
            <person name="Kai C."/>
            <person name="Sasaki D."/>
            <person name="Tomaru Y."/>
            <person name="Fukuda S."/>
            <person name="Kanamori-Katayama M."/>
            <person name="Suzuki M."/>
            <person name="Aoki J."/>
            <person name="Arakawa T."/>
            <person name="Iida J."/>
            <person name="Imamura K."/>
            <person name="Itoh M."/>
            <person name="Kato T."/>
            <person name="Kawaji H."/>
            <person name="Kawagashira N."/>
            <person name="Kawashima T."/>
            <person name="Kojima M."/>
            <person name="Kondo S."/>
            <person name="Konno H."/>
            <person name="Nakano K."/>
            <person name="Ninomiya N."/>
            <person name="Nishio T."/>
            <person name="Okada M."/>
            <person name="Plessy C."/>
            <person name="Shibata K."/>
            <person name="Shiraki T."/>
            <person name="Suzuki S."/>
            <person name="Tagami M."/>
            <person name="Waki K."/>
            <person name="Watahiki A."/>
            <person name="Okamura-Oho Y."/>
            <person name="Suzuki H."/>
            <person name="Kawai J."/>
            <person name="Hayashizaki Y."/>
        </authorList>
    </citation>
    <scope>NUCLEOTIDE SEQUENCE [LARGE SCALE MRNA]</scope>
    <source>
        <strain>C57BL/6J</strain>
        <tissue>Testis</tissue>
    </source>
</reference>
<reference key="2">
    <citation type="journal article" date="2009" name="PLoS Biol.">
        <title>Lineage-specific biology revealed by a finished genome assembly of the mouse.</title>
        <authorList>
            <person name="Church D.M."/>
            <person name="Goodstadt L."/>
            <person name="Hillier L.W."/>
            <person name="Zody M.C."/>
            <person name="Goldstein S."/>
            <person name="She X."/>
            <person name="Bult C.J."/>
            <person name="Agarwala R."/>
            <person name="Cherry J.L."/>
            <person name="DiCuccio M."/>
            <person name="Hlavina W."/>
            <person name="Kapustin Y."/>
            <person name="Meric P."/>
            <person name="Maglott D."/>
            <person name="Birtle Z."/>
            <person name="Marques A.C."/>
            <person name="Graves T."/>
            <person name="Zhou S."/>
            <person name="Teague B."/>
            <person name="Potamousis K."/>
            <person name="Churas C."/>
            <person name="Place M."/>
            <person name="Herschleb J."/>
            <person name="Runnheim R."/>
            <person name="Forrest D."/>
            <person name="Amos-Landgraf J."/>
            <person name="Schwartz D.C."/>
            <person name="Cheng Z."/>
            <person name="Lindblad-Toh K."/>
            <person name="Eichler E.E."/>
            <person name="Ponting C.P."/>
        </authorList>
    </citation>
    <scope>NUCLEOTIDE SEQUENCE [LARGE SCALE GENOMIC DNA]</scope>
    <source>
        <strain>C57BL/6J</strain>
    </source>
</reference>
<feature type="chain" id="PRO_0000312278" description="Proline-rich protein 30">
    <location>
        <begin position="1"/>
        <end position="401"/>
    </location>
</feature>
<feature type="region of interest" description="Disordered" evidence="1">
    <location>
        <begin position="69"/>
        <end position="93"/>
    </location>
</feature>
<feature type="region of interest" description="Disordered" evidence="1">
    <location>
        <begin position="129"/>
        <end position="191"/>
    </location>
</feature>
<feature type="region of interest" description="Disordered" evidence="1">
    <location>
        <begin position="357"/>
        <end position="401"/>
    </location>
</feature>
<feature type="compositionally biased region" description="Polar residues" evidence="1">
    <location>
        <begin position="69"/>
        <end position="80"/>
    </location>
</feature>
<feature type="compositionally biased region" description="Low complexity" evidence="1">
    <location>
        <begin position="83"/>
        <end position="93"/>
    </location>
</feature>
<feature type="compositionally biased region" description="Low complexity" evidence="1">
    <location>
        <begin position="129"/>
        <end position="147"/>
    </location>
</feature>
<feature type="compositionally biased region" description="Polar residues" evidence="1">
    <location>
        <begin position="148"/>
        <end position="186"/>
    </location>
</feature>
<feature type="compositionally biased region" description="Polar residues" evidence="1">
    <location>
        <begin position="357"/>
        <end position="368"/>
    </location>
</feature>
<feature type="sequence conflict" description="In Ref. 1; BAB24878." evidence="2" ref="1">
    <original>S</original>
    <variation>T</variation>
    <location>
        <position position="133"/>
    </location>
</feature>
<feature type="sequence conflict" description="In Ref. 1; BAB24878." evidence="2" ref="1">
    <original>K</original>
    <variation>R</variation>
    <location>
        <position position="204"/>
    </location>
</feature>